<sequence length="54" mass="6553">MAAKGARMIIHLECTECKNRNYTTEKNKKNDPDRLELRKYCKFCRKHTLHRETK</sequence>
<organism>
    <name type="scientific">Caldicellulosiruptor saccharolyticus (strain ATCC 43494 / DSM 8903 / Tp8T 6331)</name>
    <dbReference type="NCBI Taxonomy" id="351627"/>
    <lineage>
        <taxon>Bacteria</taxon>
        <taxon>Bacillati</taxon>
        <taxon>Bacillota</taxon>
        <taxon>Bacillota incertae sedis</taxon>
        <taxon>Caldicellulosiruptorales</taxon>
        <taxon>Caldicellulosiruptoraceae</taxon>
        <taxon>Caldicellulosiruptor</taxon>
    </lineage>
</organism>
<evidence type="ECO:0000255" key="1">
    <source>
        <dbReference type="HAMAP-Rule" id="MF_00294"/>
    </source>
</evidence>
<evidence type="ECO:0000305" key="2"/>
<keyword id="KW-0687">Ribonucleoprotein</keyword>
<keyword id="KW-0689">Ribosomal protein</keyword>
<proteinExistence type="inferred from homology"/>
<accession>A4XLK5</accession>
<comment type="similarity">
    <text evidence="1">Belongs to the bacterial ribosomal protein bL33 family.</text>
</comment>
<protein>
    <recommendedName>
        <fullName evidence="1">Large ribosomal subunit protein bL33</fullName>
    </recommendedName>
    <alternativeName>
        <fullName evidence="2">50S ribosomal protein L33</fullName>
    </alternativeName>
</protein>
<gene>
    <name evidence="1" type="primary">rpmG</name>
    <name type="ordered locus">Csac_2210</name>
</gene>
<name>RL33_CALS8</name>
<feature type="chain" id="PRO_0000356414" description="Large ribosomal subunit protein bL33">
    <location>
        <begin position="1"/>
        <end position="54"/>
    </location>
</feature>
<dbReference type="EMBL" id="CP000679">
    <property type="protein sequence ID" value="ABP67790.1"/>
    <property type="molecule type" value="Genomic_DNA"/>
</dbReference>
<dbReference type="RefSeq" id="WP_011917719.1">
    <property type="nucleotide sequence ID" value="NC_009437.1"/>
</dbReference>
<dbReference type="SMR" id="A4XLK5"/>
<dbReference type="STRING" id="351627.Csac_2210"/>
<dbReference type="KEGG" id="csc:Csac_2210"/>
<dbReference type="eggNOG" id="COG0267">
    <property type="taxonomic scope" value="Bacteria"/>
</dbReference>
<dbReference type="HOGENOM" id="CLU_190949_0_2_9"/>
<dbReference type="OrthoDB" id="9801333at2"/>
<dbReference type="Proteomes" id="UP000000256">
    <property type="component" value="Chromosome"/>
</dbReference>
<dbReference type="GO" id="GO:0005737">
    <property type="term" value="C:cytoplasm"/>
    <property type="evidence" value="ECO:0007669"/>
    <property type="project" value="UniProtKB-ARBA"/>
</dbReference>
<dbReference type="GO" id="GO:1990904">
    <property type="term" value="C:ribonucleoprotein complex"/>
    <property type="evidence" value="ECO:0007669"/>
    <property type="project" value="UniProtKB-KW"/>
</dbReference>
<dbReference type="GO" id="GO:0005840">
    <property type="term" value="C:ribosome"/>
    <property type="evidence" value="ECO:0007669"/>
    <property type="project" value="UniProtKB-KW"/>
</dbReference>
<dbReference type="GO" id="GO:0003735">
    <property type="term" value="F:structural constituent of ribosome"/>
    <property type="evidence" value="ECO:0007669"/>
    <property type="project" value="InterPro"/>
</dbReference>
<dbReference type="GO" id="GO:0006412">
    <property type="term" value="P:translation"/>
    <property type="evidence" value="ECO:0007669"/>
    <property type="project" value="UniProtKB-UniRule"/>
</dbReference>
<dbReference type="Gene3D" id="2.20.28.120">
    <property type="entry name" value="Ribosomal protein L33"/>
    <property type="match status" value="1"/>
</dbReference>
<dbReference type="HAMAP" id="MF_00294">
    <property type="entry name" value="Ribosomal_bL33"/>
    <property type="match status" value="1"/>
</dbReference>
<dbReference type="InterPro" id="IPR001705">
    <property type="entry name" value="Ribosomal_bL33"/>
</dbReference>
<dbReference type="InterPro" id="IPR018264">
    <property type="entry name" value="Ribosomal_bL33_CS"/>
</dbReference>
<dbReference type="InterPro" id="IPR038584">
    <property type="entry name" value="Ribosomal_bL33_sf"/>
</dbReference>
<dbReference type="InterPro" id="IPR011332">
    <property type="entry name" value="Ribosomal_zn-bd"/>
</dbReference>
<dbReference type="NCBIfam" id="NF001764">
    <property type="entry name" value="PRK00504.1"/>
    <property type="match status" value="1"/>
</dbReference>
<dbReference type="NCBIfam" id="NF001860">
    <property type="entry name" value="PRK00595.1"/>
    <property type="match status" value="1"/>
</dbReference>
<dbReference type="NCBIfam" id="TIGR01023">
    <property type="entry name" value="rpmG_bact"/>
    <property type="match status" value="1"/>
</dbReference>
<dbReference type="PANTHER" id="PTHR43168">
    <property type="entry name" value="50S RIBOSOMAL PROTEIN L33, CHLOROPLASTIC"/>
    <property type="match status" value="1"/>
</dbReference>
<dbReference type="PANTHER" id="PTHR43168:SF2">
    <property type="entry name" value="LARGE RIBOSOMAL SUBUNIT PROTEIN BL33C"/>
    <property type="match status" value="1"/>
</dbReference>
<dbReference type="Pfam" id="PF00471">
    <property type="entry name" value="Ribosomal_L33"/>
    <property type="match status" value="1"/>
</dbReference>
<dbReference type="SUPFAM" id="SSF57829">
    <property type="entry name" value="Zn-binding ribosomal proteins"/>
    <property type="match status" value="1"/>
</dbReference>
<dbReference type="PROSITE" id="PS00582">
    <property type="entry name" value="RIBOSOMAL_L33"/>
    <property type="match status" value="1"/>
</dbReference>
<reference key="1">
    <citation type="submission" date="2007-04" db="EMBL/GenBank/DDBJ databases">
        <title>Genome sequence of the thermophilic hydrogen-producing bacterium Caldicellulosiruptor saccharolyticus DSM 8903.</title>
        <authorList>
            <person name="Copeland A."/>
            <person name="Lucas S."/>
            <person name="Lapidus A."/>
            <person name="Barry K."/>
            <person name="Detter J.C."/>
            <person name="Glavina del Rio T."/>
            <person name="Hammon N."/>
            <person name="Israni S."/>
            <person name="Dalin E."/>
            <person name="Tice H."/>
            <person name="Pitluck S."/>
            <person name="Kiss H."/>
            <person name="Brettin T."/>
            <person name="Bruce D."/>
            <person name="Han C."/>
            <person name="Schmutz J."/>
            <person name="Larimer F."/>
            <person name="Land M."/>
            <person name="Hauser L."/>
            <person name="Kyrpides N."/>
            <person name="Lykidis A."/>
            <person name="van de Werken H.J.G."/>
            <person name="Verhaart M.R.A."/>
            <person name="VanFossen A.L."/>
            <person name="Lewis D.L."/>
            <person name="Nichols J.D."/>
            <person name="Goorissen H.P."/>
            <person name="van Niel E.W.J."/>
            <person name="Stams F.J.M."/>
            <person name="Willquist K.U."/>
            <person name="Ward D.E."/>
            <person name="van der Oost J."/>
            <person name="Kelly R.M."/>
            <person name="Kengen S.M.W."/>
            <person name="Richardson P."/>
        </authorList>
    </citation>
    <scope>NUCLEOTIDE SEQUENCE [LARGE SCALE GENOMIC DNA]</scope>
    <source>
        <strain>ATCC 43494 / DSM 8903 / Tp8T 6331</strain>
    </source>
</reference>